<comment type="function">
    <text evidence="1">Catalyzes the dehydration of D-mannonate.</text>
</comment>
<comment type="catalytic activity">
    <reaction evidence="1">
        <text>D-mannonate = 2-dehydro-3-deoxy-D-gluconate + H2O</text>
        <dbReference type="Rhea" id="RHEA:20097"/>
        <dbReference type="ChEBI" id="CHEBI:15377"/>
        <dbReference type="ChEBI" id="CHEBI:17767"/>
        <dbReference type="ChEBI" id="CHEBI:57990"/>
        <dbReference type="EC" id="4.2.1.8"/>
    </reaction>
</comment>
<comment type="cofactor">
    <cofactor evidence="1">
        <name>Fe(2+)</name>
        <dbReference type="ChEBI" id="CHEBI:29033"/>
    </cofactor>
    <cofactor evidence="1">
        <name>Mn(2+)</name>
        <dbReference type="ChEBI" id="CHEBI:29035"/>
    </cofactor>
</comment>
<comment type="pathway">
    <text evidence="1">Carbohydrate metabolism; pentose and glucuronate interconversion.</text>
</comment>
<comment type="similarity">
    <text evidence="1">Belongs to the mannonate dehydratase family.</text>
</comment>
<accession>Q03U06</accession>
<gene>
    <name evidence="1" type="primary">uxuA</name>
    <name type="ordered locus">LVIS_0146</name>
</gene>
<evidence type="ECO:0000255" key="1">
    <source>
        <dbReference type="HAMAP-Rule" id="MF_00106"/>
    </source>
</evidence>
<feature type="chain" id="PRO_1000034332" description="Mannonate dehydratase">
    <location>
        <begin position="1"/>
        <end position="356"/>
    </location>
</feature>
<keyword id="KW-0408">Iron</keyword>
<keyword id="KW-0456">Lyase</keyword>
<keyword id="KW-0464">Manganese</keyword>
<keyword id="KW-1185">Reference proteome</keyword>
<protein>
    <recommendedName>
        <fullName evidence="1">Mannonate dehydratase</fullName>
        <ecNumber evidence="1">4.2.1.8</ecNumber>
    </recommendedName>
    <alternativeName>
        <fullName evidence="1">D-mannonate hydro-lyase</fullName>
    </alternativeName>
</protein>
<organism>
    <name type="scientific">Levilactobacillus brevis (strain ATCC 367 / BCRC 12310 / CIP 105137 / JCM 1170 / LMG 11437 / NCIMB 947 / NCTC 947)</name>
    <name type="common">Lactobacillus brevis</name>
    <dbReference type="NCBI Taxonomy" id="387344"/>
    <lineage>
        <taxon>Bacteria</taxon>
        <taxon>Bacillati</taxon>
        <taxon>Bacillota</taxon>
        <taxon>Bacilli</taxon>
        <taxon>Lactobacillales</taxon>
        <taxon>Lactobacillaceae</taxon>
        <taxon>Levilactobacillus</taxon>
    </lineage>
</organism>
<sequence>MEMGFRWYGSQNDQIHLADIRQIPGVRQVVGALFDIPVGEVWPEDQIIRLKHQIEAAGLKFTVVESVNIHDDIKIGLPSRDRYIENYQQTIRNLAAAGVRTICYNFMPIFDWVRTNLHFSLADGSQALAFEHRQVQRQPQDIIHEIENNANGFVLPGWEPERLAQVQQLFDAYAGVDETQLAANLNYFLDAIIPVCEECHVQMALHPDDPPRELFGLPRIYKNLADMNRIVAMNPSTANGFTICTGSLGENPQNDVPAIIREFVPQGRVPFVHARNIKFMSDQGDFHESAHLSSMGSLDMFAIMQALHETGFSGVIRPDHGRDIWHESGRPGYGLYDRALGITYLNGLWEALEKQA</sequence>
<proteinExistence type="inferred from homology"/>
<reference key="1">
    <citation type="journal article" date="2006" name="Proc. Natl. Acad. Sci. U.S.A.">
        <title>Comparative genomics of the lactic acid bacteria.</title>
        <authorList>
            <person name="Makarova K.S."/>
            <person name="Slesarev A."/>
            <person name="Wolf Y.I."/>
            <person name="Sorokin A."/>
            <person name="Mirkin B."/>
            <person name="Koonin E.V."/>
            <person name="Pavlov A."/>
            <person name="Pavlova N."/>
            <person name="Karamychev V."/>
            <person name="Polouchine N."/>
            <person name="Shakhova V."/>
            <person name="Grigoriev I."/>
            <person name="Lou Y."/>
            <person name="Rohksar D."/>
            <person name="Lucas S."/>
            <person name="Huang K."/>
            <person name="Goodstein D.M."/>
            <person name="Hawkins T."/>
            <person name="Plengvidhya V."/>
            <person name="Welker D."/>
            <person name="Hughes J."/>
            <person name="Goh Y."/>
            <person name="Benson A."/>
            <person name="Baldwin K."/>
            <person name="Lee J.-H."/>
            <person name="Diaz-Muniz I."/>
            <person name="Dosti B."/>
            <person name="Smeianov V."/>
            <person name="Wechter W."/>
            <person name="Barabote R."/>
            <person name="Lorca G."/>
            <person name="Altermann E."/>
            <person name="Barrangou R."/>
            <person name="Ganesan B."/>
            <person name="Xie Y."/>
            <person name="Rawsthorne H."/>
            <person name="Tamir D."/>
            <person name="Parker C."/>
            <person name="Breidt F."/>
            <person name="Broadbent J.R."/>
            <person name="Hutkins R."/>
            <person name="O'Sullivan D."/>
            <person name="Steele J."/>
            <person name="Unlu G."/>
            <person name="Saier M.H. Jr."/>
            <person name="Klaenhammer T."/>
            <person name="Richardson P."/>
            <person name="Kozyavkin S."/>
            <person name="Weimer B.C."/>
            <person name="Mills D.A."/>
        </authorList>
    </citation>
    <scope>NUCLEOTIDE SEQUENCE [LARGE SCALE GENOMIC DNA]</scope>
    <source>
        <strain>ATCC 367 / BCRC 12310 / CIP 105137 / JCM 1170 / LMG 11437 / NCIMB 947 / NCTC 947</strain>
    </source>
</reference>
<name>UXUA_LEVBA</name>
<dbReference type="EC" id="4.2.1.8" evidence="1"/>
<dbReference type="EMBL" id="CP000416">
    <property type="protein sequence ID" value="ABJ63316.1"/>
    <property type="molecule type" value="Genomic_DNA"/>
</dbReference>
<dbReference type="RefSeq" id="WP_011666952.1">
    <property type="nucleotide sequence ID" value="NC_008497.1"/>
</dbReference>
<dbReference type="SMR" id="Q03U06"/>
<dbReference type="STRING" id="387344.LVIS_0146"/>
<dbReference type="KEGG" id="lbr:LVIS_0146"/>
<dbReference type="eggNOG" id="COG1312">
    <property type="taxonomic scope" value="Bacteria"/>
</dbReference>
<dbReference type="HOGENOM" id="CLU_058621_1_0_9"/>
<dbReference type="UniPathway" id="UPA00246"/>
<dbReference type="Proteomes" id="UP000001652">
    <property type="component" value="Chromosome"/>
</dbReference>
<dbReference type="GO" id="GO:0008198">
    <property type="term" value="F:ferrous iron binding"/>
    <property type="evidence" value="ECO:0007669"/>
    <property type="project" value="TreeGrafter"/>
</dbReference>
<dbReference type="GO" id="GO:0030145">
    <property type="term" value="F:manganese ion binding"/>
    <property type="evidence" value="ECO:0007669"/>
    <property type="project" value="TreeGrafter"/>
</dbReference>
<dbReference type="GO" id="GO:0008927">
    <property type="term" value="F:mannonate dehydratase activity"/>
    <property type="evidence" value="ECO:0007669"/>
    <property type="project" value="UniProtKB-UniRule"/>
</dbReference>
<dbReference type="GO" id="GO:0042840">
    <property type="term" value="P:D-glucuronate catabolic process"/>
    <property type="evidence" value="ECO:0007669"/>
    <property type="project" value="TreeGrafter"/>
</dbReference>
<dbReference type="Gene3D" id="3.20.20.150">
    <property type="entry name" value="Divalent-metal-dependent TIM barrel enzymes"/>
    <property type="match status" value="1"/>
</dbReference>
<dbReference type="HAMAP" id="MF_00106">
    <property type="entry name" value="UxuA"/>
    <property type="match status" value="1"/>
</dbReference>
<dbReference type="InterPro" id="IPR004628">
    <property type="entry name" value="Man_deHydtase"/>
</dbReference>
<dbReference type="InterPro" id="IPR036237">
    <property type="entry name" value="Xyl_isomerase-like_sf"/>
</dbReference>
<dbReference type="NCBIfam" id="NF003027">
    <property type="entry name" value="PRK03906.1"/>
    <property type="match status" value="2"/>
</dbReference>
<dbReference type="NCBIfam" id="TIGR00695">
    <property type="entry name" value="uxuA"/>
    <property type="match status" value="1"/>
</dbReference>
<dbReference type="PANTHER" id="PTHR30387">
    <property type="entry name" value="MANNONATE DEHYDRATASE"/>
    <property type="match status" value="1"/>
</dbReference>
<dbReference type="PANTHER" id="PTHR30387:SF2">
    <property type="entry name" value="MANNONATE DEHYDRATASE"/>
    <property type="match status" value="1"/>
</dbReference>
<dbReference type="Pfam" id="PF03786">
    <property type="entry name" value="UxuA"/>
    <property type="match status" value="1"/>
</dbReference>
<dbReference type="PIRSF" id="PIRSF016049">
    <property type="entry name" value="Man_dehyd"/>
    <property type="match status" value="1"/>
</dbReference>
<dbReference type="SUPFAM" id="SSF51658">
    <property type="entry name" value="Xylose isomerase-like"/>
    <property type="match status" value="1"/>
</dbReference>